<accession>Q9YPD4</accession>
<feature type="chain" id="PRO_0000402446" description="Capsid protein">
    <location>
        <begin position="1"/>
        <end position="198"/>
    </location>
</feature>
<feature type="region of interest" description="Disordered" evidence="1">
    <location>
        <begin position="1"/>
        <end position="32"/>
    </location>
</feature>
<feature type="compositionally biased region" description="Basic residues" evidence="1">
    <location>
        <begin position="1"/>
        <end position="13"/>
    </location>
</feature>
<evidence type="ECO:0000256" key="1">
    <source>
        <dbReference type="SAM" id="MobiDB-lite"/>
    </source>
</evidence>
<evidence type="ECO:0000305" key="2"/>
<dbReference type="EMBL" id="U07551">
    <property type="protein sequence ID" value="AAA53091.1"/>
    <property type="molecule type" value="Genomic_RNA"/>
</dbReference>
<dbReference type="RefSeq" id="NP_042511.1">
    <property type="nucleotide sequence ID" value="NC_001633.1"/>
</dbReference>
<dbReference type="KEGG" id="vg:1497106"/>
<dbReference type="Proteomes" id="UP000006824">
    <property type="component" value="Segment"/>
</dbReference>
<dbReference type="GO" id="GO:0039615">
    <property type="term" value="C:T=1 icosahedral viral capsid"/>
    <property type="evidence" value="ECO:0007669"/>
    <property type="project" value="UniProtKB-KW"/>
</dbReference>
<comment type="function">
    <text evidence="2">Capsid protein self-assembles to form a bacilliform icosahedral capsid with a T=1 symmetry, about 50 nm length and 20 nm large.</text>
</comment>
<comment type="subcellular location">
    <subcellularLocation>
        <location evidence="2">Virion</location>
    </subcellularLocation>
</comment>
<name>CAPSD_MBVLF</name>
<sequence length="198" mass="21853">MANRRQSRRRGNKNRNSATVRRAPPNRATQSSSGKVKFVKWIAASPTKLIPHIGENETSYGVLFDITGTTFPELSSLMSRHSRYRVLSLGARIVPYDPNCLGAHSVKVFAESVYDSSATPTVPSVHYLQSNGCRVVPANKQLSSPPSSDVNKYYEICSDDAVIGRIMYAWNGPGLSTARVGFCSFEVYADLEFDGIRE</sequence>
<proteinExistence type="predicted"/>
<reference key="1">
    <citation type="journal article" date="1994" name="Virology">
        <title>The nucleotide sequence and genome organization of mushroom bacilliform virus: a single-stranded RNA virus of Agaricus bisporus (Lange) Imbach.</title>
        <authorList>
            <person name="Revill P.A."/>
            <person name="Davidson A.D."/>
            <person name="Wright P.J."/>
        </authorList>
    </citation>
    <scope>NUCLEOTIDE SEQUENCE [GENOMIC RNA]</scope>
</reference>
<organismHost>
    <name type="scientific">Agaricus bisporus</name>
    <name type="common">White button mushroom</name>
    <dbReference type="NCBI Taxonomy" id="5341"/>
</organismHost>
<keyword id="KW-0167">Capsid protein</keyword>
<keyword id="KW-1185">Reference proteome</keyword>
<keyword id="KW-1140">T=1 icosahedral capsid protein</keyword>
<keyword id="KW-0946">Virion</keyword>
<organism>
    <name type="scientific">Mushroom bacilliform virus (isolate Australia/AUS LF-1)</name>
    <name type="common">MBV</name>
    <dbReference type="NCBI Taxonomy" id="650482"/>
    <lineage>
        <taxon>Viruses</taxon>
        <taxon>Riboviria</taxon>
        <taxon>Orthornavirae</taxon>
        <taxon>Pisuviricota</taxon>
        <taxon>Pisoniviricetes</taxon>
        <taxon>Sobelivirales</taxon>
        <taxon>Barnaviridae</taxon>
        <taxon>Barnavirus</taxon>
        <taxon>Mushroom bacilliform virus</taxon>
    </lineage>
</organism>
<gene>
    <name type="ORF">ORF4</name>
</gene>
<protein>
    <recommendedName>
        <fullName>Capsid protein</fullName>
        <shortName>CP</shortName>
    </recommendedName>
    <alternativeName>
        <fullName>Coat protein</fullName>
    </alternativeName>
</protein>